<evidence type="ECO:0000250" key="1"/>
<evidence type="ECO:0000255" key="2"/>
<evidence type="ECO:0000305" key="3"/>
<evidence type="ECO:0000312" key="4">
    <source>
        <dbReference type="HGNC" id="HGNC:18089"/>
    </source>
</evidence>
<evidence type="ECO:0000312" key="5">
    <source>
        <dbReference type="HGNC" id="HGNC:30847"/>
    </source>
</evidence>
<feature type="signal peptide" evidence="2">
    <location>
        <begin position="1"/>
        <end position="22"/>
    </location>
</feature>
<feature type="chain" id="PRO_0000341263" description="Putative beta-defensin 108A">
    <location>
        <begin position="23"/>
        <end position="73"/>
    </location>
</feature>
<feature type="disulfide bond" evidence="1">
    <location>
        <begin position="28"/>
        <end position="55"/>
    </location>
</feature>
<feature type="disulfide bond" evidence="1">
    <location>
        <begin position="35"/>
        <end position="49"/>
    </location>
</feature>
<feature type="disulfide bond" evidence="1">
    <location>
        <begin position="39"/>
        <end position="56"/>
    </location>
</feature>
<protein>
    <recommendedName>
        <fullName>Putative beta-defensin 108A</fullName>
    </recommendedName>
    <alternativeName>
        <fullName evidence="4">Defensin, beta 108A</fullName>
    </alternativeName>
    <alternativeName>
        <fullName evidence="5">Defensin, beta 108C</fullName>
    </alternativeName>
    <alternativeName>
        <fullName>Putative beta-defensin 108B pseudogene 1/2</fullName>
    </alternativeName>
</protein>
<keyword id="KW-0044">Antibiotic</keyword>
<keyword id="KW-0929">Antimicrobial</keyword>
<keyword id="KW-0211">Defensin</keyword>
<keyword id="KW-1015">Disulfide bond</keyword>
<keyword id="KW-1185">Reference proteome</keyword>
<keyword id="KW-0964">Secreted</keyword>
<keyword id="KW-0732">Signal</keyword>
<sequence>MRIAVLFFTIFFFMSQVLPAKGKFKEICERPNGSCRDFCLETEIHVGRCLNSRPCCLPLGHQPRIESTTPKKD</sequence>
<reference key="1">
    <citation type="journal article" date="2006" name="Nature">
        <title>DNA sequence and analysis of human chromosome 8.</title>
        <authorList>
            <person name="Nusbaum C."/>
            <person name="Mikkelsen T.S."/>
            <person name="Zody M.C."/>
            <person name="Asakawa S."/>
            <person name="Taudien S."/>
            <person name="Garber M."/>
            <person name="Kodira C.D."/>
            <person name="Schueler M.G."/>
            <person name="Shimizu A."/>
            <person name="Whittaker C.A."/>
            <person name="Chang J.L."/>
            <person name="Cuomo C.A."/>
            <person name="Dewar K."/>
            <person name="FitzGerald M.G."/>
            <person name="Yang X."/>
            <person name="Allen N.R."/>
            <person name="Anderson S."/>
            <person name="Asakawa T."/>
            <person name="Blechschmidt K."/>
            <person name="Bloom T."/>
            <person name="Borowsky M.L."/>
            <person name="Butler J."/>
            <person name="Cook A."/>
            <person name="Corum B."/>
            <person name="DeArellano K."/>
            <person name="DeCaprio D."/>
            <person name="Dooley K.T."/>
            <person name="Dorris L. III"/>
            <person name="Engels R."/>
            <person name="Gloeckner G."/>
            <person name="Hafez N."/>
            <person name="Hagopian D.S."/>
            <person name="Hall J.L."/>
            <person name="Ishikawa S.K."/>
            <person name="Jaffe D.B."/>
            <person name="Kamat A."/>
            <person name="Kudoh J."/>
            <person name="Lehmann R."/>
            <person name="Lokitsang T."/>
            <person name="Macdonald P."/>
            <person name="Major J.E."/>
            <person name="Matthews C.D."/>
            <person name="Mauceli E."/>
            <person name="Menzel U."/>
            <person name="Mihalev A.H."/>
            <person name="Minoshima S."/>
            <person name="Murayama Y."/>
            <person name="Naylor J.W."/>
            <person name="Nicol R."/>
            <person name="Nguyen C."/>
            <person name="O'Leary S.B."/>
            <person name="O'Neill K."/>
            <person name="Parker S.C.J."/>
            <person name="Polley A."/>
            <person name="Raymond C.K."/>
            <person name="Reichwald K."/>
            <person name="Rodriguez J."/>
            <person name="Sasaki T."/>
            <person name="Schilhabel M."/>
            <person name="Siddiqui R."/>
            <person name="Smith C.L."/>
            <person name="Sneddon T.P."/>
            <person name="Talamas J.A."/>
            <person name="Tenzin P."/>
            <person name="Topham K."/>
            <person name="Venkataraman V."/>
            <person name="Wen G."/>
            <person name="Yamazaki S."/>
            <person name="Young S.K."/>
            <person name="Zeng Q."/>
            <person name="Zimmer A.R."/>
            <person name="Rosenthal A."/>
            <person name="Birren B.W."/>
            <person name="Platzer M."/>
            <person name="Shimizu N."/>
            <person name="Lander E.S."/>
        </authorList>
    </citation>
    <scope>NUCLEOTIDE SEQUENCE [LARGE SCALE GENOMIC DNA]</scope>
</reference>
<reference key="2">
    <citation type="journal article" date="2003" name="Genome Biol.">
        <title>Duplication and selection in the evolution of primate beta-defensin genes.</title>
        <authorList>
            <person name="Semple C.A.M."/>
            <person name="Rolfe M."/>
            <person name="Dorin J.R."/>
        </authorList>
    </citation>
    <scope>NUCLEOTIDE SEQUENCE [MRNA] OF 1-59</scope>
</reference>
<dbReference type="EMBL" id="AC130360">
    <property type="status" value="NOT_ANNOTATED_CDS"/>
    <property type="molecule type" value="Genomic_DNA"/>
</dbReference>
<dbReference type="EMBL" id="AF540980">
    <property type="status" value="NOT_ANNOTATED_CDS"/>
    <property type="molecule type" value="mRNA"/>
</dbReference>
<dbReference type="SMR" id="A8MXU0"/>
<dbReference type="BioMuta" id="HGNC:18089"/>
<dbReference type="AGR" id="HGNC:18089"/>
<dbReference type="AGR" id="HGNC:30847"/>
<dbReference type="GeneCards" id="DEFB108A"/>
<dbReference type="GeneCards" id="DEFB108C"/>
<dbReference type="HGNC" id="HGNC:18089">
    <property type="gene designation" value="DEFB108A"/>
</dbReference>
<dbReference type="HGNC" id="HGNC:30847">
    <property type="gene designation" value="DEFB108C"/>
</dbReference>
<dbReference type="neXtProt" id="NX_A8MXU0"/>
<dbReference type="InParanoid" id="A8MXU0"/>
<dbReference type="PAN-GO" id="A8MXU0">
    <property type="GO annotations" value="0 GO annotations based on evolutionary models"/>
</dbReference>
<dbReference type="PhylomeDB" id="A8MXU0"/>
<dbReference type="PathwayCommons" id="A8MXU0"/>
<dbReference type="Reactome" id="R-HSA-1461957">
    <property type="pathway name" value="Beta defensins"/>
</dbReference>
<dbReference type="Pharos" id="A8MXU0">
    <property type="development level" value="Tdark"/>
</dbReference>
<dbReference type="PRO" id="PR:A8MXU0"/>
<dbReference type="Proteomes" id="UP000005640">
    <property type="component" value="Unplaced"/>
</dbReference>
<dbReference type="RNAct" id="A8MXU0">
    <property type="molecule type" value="protein"/>
</dbReference>
<dbReference type="GO" id="GO:0005576">
    <property type="term" value="C:extracellular region"/>
    <property type="evidence" value="ECO:0007669"/>
    <property type="project" value="UniProtKB-SubCell"/>
</dbReference>
<dbReference type="GO" id="GO:0042742">
    <property type="term" value="P:defense response to bacterium"/>
    <property type="evidence" value="ECO:0007669"/>
    <property type="project" value="UniProtKB-KW"/>
</dbReference>
<dbReference type="GO" id="GO:0045087">
    <property type="term" value="P:innate immune response"/>
    <property type="evidence" value="ECO:0007669"/>
    <property type="project" value="InterPro"/>
</dbReference>
<dbReference type="InterPro" id="IPR025933">
    <property type="entry name" value="Beta_defensin_dom"/>
</dbReference>
<dbReference type="PANTHER" id="PTHR20515">
    <property type="entry name" value="BETA-DEFENSIN"/>
    <property type="match status" value="1"/>
</dbReference>
<dbReference type="PANTHER" id="PTHR20515:SF3">
    <property type="entry name" value="BETA-DEFENSIN 109B-RELATED"/>
    <property type="match status" value="1"/>
</dbReference>
<dbReference type="Pfam" id="PF13841">
    <property type="entry name" value="Defensin_beta_2"/>
    <property type="match status" value="1"/>
</dbReference>
<gene>
    <name evidence="4" type="primary">DEFB108A</name>
    <name type="synonym">DEFB108P1</name>
</gene>
<gene>
    <name evidence="5" type="primary">DEFB108C</name>
    <name type="synonym">DEFB108P2</name>
</gene>
<name>DB108_HUMAN</name>
<organism>
    <name type="scientific">Homo sapiens</name>
    <name type="common">Human</name>
    <dbReference type="NCBI Taxonomy" id="9606"/>
    <lineage>
        <taxon>Eukaryota</taxon>
        <taxon>Metazoa</taxon>
        <taxon>Chordata</taxon>
        <taxon>Craniata</taxon>
        <taxon>Vertebrata</taxon>
        <taxon>Euteleostomi</taxon>
        <taxon>Mammalia</taxon>
        <taxon>Eutheria</taxon>
        <taxon>Euarchontoglires</taxon>
        <taxon>Primates</taxon>
        <taxon>Haplorrhini</taxon>
        <taxon>Catarrhini</taxon>
        <taxon>Hominidae</taxon>
        <taxon>Homo</taxon>
    </lineage>
</organism>
<comment type="function">
    <text evidence="3">Has antibacterial activity.</text>
</comment>
<comment type="subcellular location">
    <subcellularLocation>
        <location evidence="1">Secreted</location>
    </subcellularLocation>
</comment>
<comment type="similarity">
    <text evidence="3">Belongs to the beta-defensin family.</text>
</comment>
<comment type="caution">
    <text evidence="3">Could be the product of a pseudogene.</text>
</comment>
<proteinExistence type="uncertain"/>
<accession>A8MXU0</accession>